<reference key="1">
    <citation type="journal article" date="2005" name="Genetics">
        <title>Sequence finishing and gene mapping for Candida albicans chromosome 7 and syntenic analysis against the Saccharomyces cerevisiae genome.</title>
        <authorList>
            <person name="Chibana H."/>
            <person name="Oka N."/>
            <person name="Nakayama H."/>
            <person name="Aoyama T."/>
            <person name="Magee B.B."/>
            <person name="Magee P.T."/>
            <person name="Mikami Y."/>
        </authorList>
    </citation>
    <scope>NUCLEOTIDE SEQUENCE [LARGE SCALE GENOMIC DNA]</scope>
    <source>
        <strain>SC5314 / ATCC MYA-2876</strain>
    </source>
</reference>
<reference key="2">
    <citation type="journal article" date="2004" name="Proc. Natl. Acad. Sci. U.S.A.">
        <title>The diploid genome sequence of Candida albicans.</title>
        <authorList>
            <person name="Jones T."/>
            <person name="Federspiel N.A."/>
            <person name="Chibana H."/>
            <person name="Dungan J."/>
            <person name="Kalman S."/>
            <person name="Magee B.B."/>
            <person name="Newport G."/>
            <person name="Thorstenson Y.R."/>
            <person name="Agabian N."/>
            <person name="Magee P.T."/>
            <person name="Davis R.W."/>
            <person name="Scherer S."/>
        </authorList>
    </citation>
    <scope>NUCLEOTIDE SEQUENCE [LARGE SCALE GENOMIC DNA]</scope>
    <source>
        <strain>SC5314 / ATCC MYA-2876</strain>
    </source>
</reference>
<reference key="3">
    <citation type="journal article" date="2007" name="Genome Biol.">
        <title>Assembly of the Candida albicans genome into sixteen supercontigs aligned on the eight chromosomes.</title>
        <authorList>
            <person name="van het Hoog M."/>
            <person name="Rast T.J."/>
            <person name="Martchenko M."/>
            <person name="Grindle S."/>
            <person name="Dignard D."/>
            <person name="Hogues H."/>
            <person name="Cuomo C."/>
            <person name="Berriman M."/>
            <person name="Scherer S."/>
            <person name="Magee B.B."/>
            <person name="Whiteway M."/>
            <person name="Chibana H."/>
            <person name="Nantel A."/>
            <person name="Magee P.T."/>
        </authorList>
    </citation>
    <scope>GENOME REANNOTATION</scope>
    <source>
        <strain>SC5314 / ATCC MYA-2876</strain>
    </source>
</reference>
<reference key="4">
    <citation type="journal article" date="2013" name="Genome Biol.">
        <title>Assembly of a phased diploid Candida albicans genome facilitates allele-specific measurements and provides a simple model for repeat and indel structure.</title>
        <authorList>
            <person name="Muzzey D."/>
            <person name="Schwartz K."/>
            <person name="Weissman J.S."/>
            <person name="Sherlock G."/>
        </authorList>
    </citation>
    <scope>NUCLEOTIDE SEQUENCE [LARGE SCALE GENOMIC DNA]</scope>
    <scope>GENOME REANNOTATION</scope>
    <source>
        <strain>SC5314 / ATCC MYA-2876</strain>
    </source>
</reference>
<organism>
    <name type="scientific">Candida albicans (strain SC5314 / ATCC MYA-2876)</name>
    <name type="common">Yeast</name>
    <dbReference type="NCBI Taxonomy" id="237561"/>
    <lineage>
        <taxon>Eukaryota</taxon>
        <taxon>Fungi</taxon>
        <taxon>Dikarya</taxon>
        <taxon>Ascomycota</taxon>
        <taxon>Saccharomycotina</taxon>
        <taxon>Pichiomycetes</taxon>
        <taxon>Debaryomycetaceae</taxon>
        <taxon>Candida/Lodderomyces clade</taxon>
        <taxon>Candida</taxon>
    </lineage>
</organism>
<dbReference type="EC" id="2.3.1.35" evidence="1"/>
<dbReference type="EC" id="2.3.1.1" evidence="1"/>
<dbReference type="EMBL" id="AP006852">
    <property type="protein sequence ID" value="BAE44732.1"/>
    <property type="molecule type" value="Genomic_DNA"/>
</dbReference>
<dbReference type="EMBL" id="CP017629">
    <property type="protein sequence ID" value="AOW30578.1"/>
    <property type="molecule type" value="Genomic_DNA"/>
</dbReference>
<dbReference type="RefSeq" id="XP_721338.1">
    <property type="nucleotide sequence ID" value="XM_716245.2"/>
</dbReference>
<dbReference type="SMR" id="Q5AH38"/>
<dbReference type="FunCoup" id="Q5AH38">
    <property type="interactions" value="312"/>
</dbReference>
<dbReference type="STRING" id="237561.Q5AH38"/>
<dbReference type="MEROPS" id="T05.001"/>
<dbReference type="EnsemblFungi" id="C7_02150C_A-T">
    <property type="protein sequence ID" value="C7_02150C_A-T-p1"/>
    <property type="gene ID" value="C7_02150C_A"/>
</dbReference>
<dbReference type="GeneID" id="3636995"/>
<dbReference type="KEGG" id="cal:CAALFM_C702150CA"/>
<dbReference type="CGD" id="CAL0000177240">
    <property type="gene designation" value="ECM42"/>
</dbReference>
<dbReference type="VEuPathDB" id="FungiDB:C7_02150C_A"/>
<dbReference type="eggNOG" id="KOG2786">
    <property type="taxonomic scope" value="Eukaryota"/>
</dbReference>
<dbReference type="HOGENOM" id="CLU_027172_1_0_1"/>
<dbReference type="InParanoid" id="Q5AH38"/>
<dbReference type="OrthoDB" id="2017946at2759"/>
<dbReference type="UniPathway" id="UPA00068">
    <property type="reaction ID" value="UER00106"/>
</dbReference>
<dbReference type="UniPathway" id="UPA00068">
    <property type="reaction ID" value="UER00111"/>
</dbReference>
<dbReference type="Proteomes" id="UP000000559">
    <property type="component" value="Chromosome 7"/>
</dbReference>
<dbReference type="GO" id="GO:0005759">
    <property type="term" value="C:mitochondrial matrix"/>
    <property type="evidence" value="ECO:0000318"/>
    <property type="project" value="GO_Central"/>
</dbReference>
<dbReference type="GO" id="GO:0004358">
    <property type="term" value="F:glutamate N-acetyltransferase activity"/>
    <property type="evidence" value="ECO:0007669"/>
    <property type="project" value="UniProtKB-UniRule"/>
</dbReference>
<dbReference type="GO" id="GO:0004042">
    <property type="term" value="F:L-glutamate N-acetyltransferase activity"/>
    <property type="evidence" value="ECO:0000318"/>
    <property type="project" value="GO_Central"/>
</dbReference>
<dbReference type="GO" id="GO:0006526">
    <property type="term" value="P:L-arginine biosynthetic process"/>
    <property type="evidence" value="ECO:0007669"/>
    <property type="project" value="UniProtKB-UniRule"/>
</dbReference>
<dbReference type="GO" id="GO:0006592">
    <property type="term" value="P:ornithine biosynthetic process"/>
    <property type="evidence" value="ECO:0000318"/>
    <property type="project" value="GO_Central"/>
</dbReference>
<dbReference type="CDD" id="cd02152">
    <property type="entry name" value="OAT"/>
    <property type="match status" value="1"/>
</dbReference>
<dbReference type="FunFam" id="3.10.20.340:FF:000002">
    <property type="entry name" value="Arginine biosynthesis bifunctional protein ArgJ, mitochondrial"/>
    <property type="match status" value="1"/>
</dbReference>
<dbReference type="FunFam" id="3.30.2330.10:FF:000001">
    <property type="entry name" value="Arginine biosynthesis bifunctional protein ArgJ, mitochondrial"/>
    <property type="match status" value="1"/>
</dbReference>
<dbReference type="FunFam" id="3.60.70.12:FF:000002">
    <property type="entry name" value="Arginine biosynthesis bifunctional protein ArgJ, mitochondrial"/>
    <property type="match status" value="1"/>
</dbReference>
<dbReference type="Gene3D" id="3.30.2330.10">
    <property type="entry name" value="arginine biosynthesis bifunctional protein suprefamily"/>
    <property type="match status" value="1"/>
</dbReference>
<dbReference type="Gene3D" id="3.10.20.340">
    <property type="entry name" value="ArgJ beta chain, C-terminal domain"/>
    <property type="match status" value="1"/>
</dbReference>
<dbReference type="Gene3D" id="3.60.70.12">
    <property type="entry name" value="L-amino peptidase D-ALA esterase/amidase"/>
    <property type="match status" value="1"/>
</dbReference>
<dbReference type="HAMAP" id="MF_01106">
    <property type="entry name" value="ArgJ"/>
    <property type="match status" value="1"/>
</dbReference>
<dbReference type="InterPro" id="IPR002813">
    <property type="entry name" value="Arg_biosynth_ArgJ"/>
</dbReference>
<dbReference type="InterPro" id="IPR016117">
    <property type="entry name" value="ArgJ-like_dom_sf"/>
</dbReference>
<dbReference type="InterPro" id="IPR042195">
    <property type="entry name" value="ArgJ_beta_C"/>
</dbReference>
<dbReference type="NCBIfam" id="TIGR00120">
    <property type="entry name" value="ArgJ"/>
    <property type="match status" value="1"/>
</dbReference>
<dbReference type="NCBIfam" id="NF003802">
    <property type="entry name" value="PRK05388.1"/>
    <property type="match status" value="1"/>
</dbReference>
<dbReference type="PANTHER" id="PTHR23100">
    <property type="entry name" value="ARGININE BIOSYNTHESIS BIFUNCTIONAL PROTEIN ARGJ"/>
    <property type="match status" value="1"/>
</dbReference>
<dbReference type="PANTHER" id="PTHR23100:SF0">
    <property type="entry name" value="ARGININE BIOSYNTHESIS BIFUNCTIONAL PROTEIN ARGJ, MITOCHONDRIAL"/>
    <property type="match status" value="1"/>
</dbReference>
<dbReference type="Pfam" id="PF01960">
    <property type="entry name" value="ArgJ"/>
    <property type="match status" value="1"/>
</dbReference>
<dbReference type="SUPFAM" id="SSF56266">
    <property type="entry name" value="DmpA/ArgJ-like"/>
    <property type="match status" value="1"/>
</dbReference>
<feature type="chain" id="PRO_0000398032" description="Arginine biosynthesis bifunctional protein ArgJ alpha chain" evidence="1">
    <location>
        <begin position="1"/>
        <end position="211"/>
    </location>
</feature>
<feature type="chain" id="PRO_0000398033" description="Arginine biosynthesis bifunctional protein ArgJ beta chain" evidence="1">
    <location>
        <begin position="212"/>
        <end position="439"/>
    </location>
</feature>
<feature type="active site" description="Nucleophile" evidence="1">
    <location>
        <position position="212"/>
    </location>
</feature>
<feature type="binding site" evidence="1">
    <location>
        <position position="175"/>
    </location>
    <ligand>
        <name>substrate</name>
    </ligand>
</feature>
<feature type="binding site" evidence="1">
    <location>
        <position position="201"/>
    </location>
    <ligand>
        <name>substrate</name>
    </ligand>
</feature>
<feature type="binding site" evidence="1">
    <location>
        <position position="212"/>
    </location>
    <ligand>
        <name>substrate</name>
    </ligand>
</feature>
<feature type="binding site" evidence="1">
    <location>
        <position position="301"/>
    </location>
    <ligand>
        <name>substrate</name>
    </ligand>
</feature>
<feature type="binding site" evidence="1">
    <location>
        <position position="434"/>
    </location>
    <ligand>
        <name>substrate</name>
    </ligand>
</feature>
<feature type="binding site" evidence="1">
    <location>
        <position position="439"/>
    </location>
    <ligand>
        <name>substrate</name>
    </ligand>
</feature>
<feature type="site" description="Involved in the stabilization of negative charge on the oxyanion by the formation of the oxyanion hole" evidence="1">
    <location>
        <position position="135"/>
    </location>
</feature>
<feature type="site" description="Involved in the stabilization of negative charge on the oxyanion by the formation of the oxyanion hole" evidence="1">
    <location>
        <position position="136"/>
    </location>
</feature>
<feature type="site" description="Cleavage; by autolysis" evidence="1">
    <location>
        <begin position="211"/>
        <end position="212"/>
    </location>
</feature>
<evidence type="ECO:0000255" key="1">
    <source>
        <dbReference type="HAMAP-Rule" id="MF_03124"/>
    </source>
</evidence>
<comment type="function">
    <text evidence="1">Catalyzes two activities which are involved in the cyclic version of arginine biosynthesis: the synthesis of acetylglutamate from glutamate and acetyl-CoA, and of ornithine by transacetylation between acetylornithine and glutamate.</text>
</comment>
<comment type="catalytic activity">
    <reaction evidence="1">
        <text>N(2)-acetyl-L-ornithine + L-glutamate = N-acetyl-L-glutamate + L-ornithine</text>
        <dbReference type="Rhea" id="RHEA:15349"/>
        <dbReference type="ChEBI" id="CHEBI:29985"/>
        <dbReference type="ChEBI" id="CHEBI:44337"/>
        <dbReference type="ChEBI" id="CHEBI:46911"/>
        <dbReference type="ChEBI" id="CHEBI:57805"/>
        <dbReference type="EC" id="2.3.1.35"/>
    </reaction>
</comment>
<comment type="catalytic activity">
    <reaction evidence="1">
        <text>L-glutamate + acetyl-CoA = N-acetyl-L-glutamate + CoA + H(+)</text>
        <dbReference type="Rhea" id="RHEA:24292"/>
        <dbReference type="ChEBI" id="CHEBI:15378"/>
        <dbReference type="ChEBI" id="CHEBI:29985"/>
        <dbReference type="ChEBI" id="CHEBI:44337"/>
        <dbReference type="ChEBI" id="CHEBI:57287"/>
        <dbReference type="ChEBI" id="CHEBI:57288"/>
        <dbReference type="EC" id="2.3.1.1"/>
    </reaction>
</comment>
<comment type="pathway">
    <text evidence="1">Amino-acid biosynthesis; L-arginine biosynthesis; L-ornithine and N-acetyl-L-glutamate from L-glutamate and N(2)-acetyl-L-ornithine (cyclic): step 1/1.</text>
</comment>
<comment type="pathway">
    <text evidence="1">Amino-acid biosynthesis; L-arginine biosynthesis; N(2)-acetyl-L-ornithine from L-glutamate: step 1/4.</text>
</comment>
<comment type="subunit">
    <text evidence="1">Heterodimer of an alpha and a beta chain.</text>
</comment>
<comment type="subcellular location">
    <subcellularLocation>
        <location evidence="1">Mitochondrion matrix</location>
    </subcellularLocation>
</comment>
<comment type="PTM">
    <text evidence="1">The alpha and beta chains are autoproteolytically processed from a single precursor protein within the mitochondrion.</text>
</comment>
<comment type="miscellaneous">
    <text evidence="1">This protein may be expected to contain an N-terminal transit peptide but none has been predicted.</text>
</comment>
<comment type="similarity">
    <text evidence="1">Belongs to the ArgJ family.</text>
</comment>
<sequence length="439" mass="46792">MHKVTKFAIRHLSDKASRFVPKAGVYPKGYAVGGIHCGVKKDGKSLDLAILQNTFGKNASAAGVFTVNKFKAAPVQVSKKILKEKSGSGINSFVINSGNANAVTGTQGMKDAEDMVLVTDSVLENPTNSSLVMSTGVIGNNLPIDKILGGIPKLASQHLGNTHQHWIDCATAICTTDTFPKLVTKRFSIGDDTYTLAGLCKGAGMICPNMATLLGFFVTDAPVTPSALQQILKYAVDRSFNSITVDGDMSTNDTIVAMANGAAGGEVIDNTSSCAERYSRLQAEIVDFAQQLAQLVVRDGEGATKFITIRVKDALSYKDAKSIASSIANSSLFKTAMYGKDANWGRILCAIGYADVTSANSVIPEKTSVKFVPVDGSEHLNLLVNGEPEQVDEERASEILQNEDLIVEINLGTNGGQSADFWTCDLSHEYVTINGDYRS</sequence>
<accession>Q5AH38</accession>
<accession>A0A1D8PQZ6</accession>
<accession>Q3MPC8</accession>
<proteinExistence type="inferred from homology"/>
<gene>
    <name type="primary">ECM42</name>
    <name type="synonym">ECM40</name>
    <name type="ordered locus">CAALFM_C702150CA</name>
    <name type="ORF">CaJ7.0250</name>
    <name type="ORF">CaO19.13853</name>
    <name type="ORF">CaO19.6500</name>
</gene>
<name>ARGJ_CANAL</name>
<keyword id="KW-0012">Acyltransferase</keyword>
<keyword id="KW-0028">Amino-acid biosynthesis</keyword>
<keyword id="KW-0055">Arginine biosynthesis</keyword>
<keyword id="KW-0068">Autocatalytic cleavage</keyword>
<keyword id="KW-0496">Mitochondrion</keyword>
<keyword id="KW-0511">Multifunctional enzyme</keyword>
<keyword id="KW-1185">Reference proteome</keyword>
<keyword id="KW-0808">Transferase</keyword>
<protein>
    <recommendedName>
        <fullName evidence="1">Arginine biosynthesis bifunctional protein ArgJ, mitochondrial</fullName>
    </recommendedName>
    <domain>
        <recommendedName>
            <fullName evidence="1">Glutamate N-acetyltransferase</fullName>
            <shortName evidence="1">GAT</shortName>
            <ecNumber evidence="1">2.3.1.35</ecNumber>
        </recommendedName>
        <alternativeName>
            <fullName evidence="1">Ornithine acetyltransferase</fullName>
            <shortName evidence="1">OATase</shortName>
        </alternativeName>
        <alternativeName>
            <fullName evidence="1">Ornithine transacetylase</fullName>
        </alternativeName>
    </domain>
    <domain>
        <recommendedName>
            <fullName evidence="1">Amino-acid acetyltransferase</fullName>
            <ecNumber evidence="1">2.3.1.1</ecNumber>
        </recommendedName>
        <alternativeName>
            <fullName evidence="1">N-acetylglutamate synthase</fullName>
            <shortName evidence="1">AGS</shortName>
        </alternativeName>
    </domain>
    <component>
        <recommendedName>
            <fullName evidence="1">Arginine biosynthesis bifunctional protein ArgJ alpha chain</fullName>
        </recommendedName>
    </component>
    <component>
        <recommendedName>
            <fullName evidence="1">Arginine biosynthesis bifunctional protein ArgJ beta chain</fullName>
        </recommendedName>
    </component>
</protein>